<gene>
    <name evidence="1" type="primary">argH</name>
    <name type="ordered locus">Pars_0971</name>
</gene>
<proteinExistence type="inferred from homology"/>
<keyword id="KW-0028">Amino-acid biosynthesis</keyword>
<keyword id="KW-0055">Arginine biosynthesis</keyword>
<keyword id="KW-0963">Cytoplasm</keyword>
<keyword id="KW-0456">Lyase</keyword>
<evidence type="ECO:0000255" key="1">
    <source>
        <dbReference type="HAMAP-Rule" id="MF_00006"/>
    </source>
</evidence>
<protein>
    <recommendedName>
        <fullName evidence="1">Argininosuccinate lyase</fullName>
        <shortName evidence="1">ASAL</shortName>
        <ecNumber evidence="1">4.3.2.1</ecNumber>
    </recommendedName>
    <alternativeName>
        <fullName evidence="1">Arginosuccinase</fullName>
    </alternativeName>
</protein>
<accession>A4WJI4</accession>
<organism>
    <name type="scientific">Pyrobaculum arsenaticum (strain DSM 13514 / JCM 11321 / PZ6)</name>
    <dbReference type="NCBI Taxonomy" id="340102"/>
    <lineage>
        <taxon>Archaea</taxon>
        <taxon>Thermoproteota</taxon>
        <taxon>Thermoprotei</taxon>
        <taxon>Thermoproteales</taxon>
        <taxon>Thermoproteaceae</taxon>
        <taxon>Pyrobaculum</taxon>
    </lineage>
</organism>
<comment type="catalytic activity">
    <reaction evidence="1">
        <text>2-(N(omega)-L-arginino)succinate = fumarate + L-arginine</text>
        <dbReference type="Rhea" id="RHEA:24020"/>
        <dbReference type="ChEBI" id="CHEBI:29806"/>
        <dbReference type="ChEBI" id="CHEBI:32682"/>
        <dbReference type="ChEBI" id="CHEBI:57472"/>
        <dbReference type="EC" id="4.3.2.1"/>
    </reaction>
</comment>
<comment type="pathway">
    <text evidence="1">Amino-acid biosynthesis; L-arginine biosynthesis; L-arginine from L-ornithine and carbamoyl phosphate: step 3/3.</text>
</comment>
<comment type="subcellular location">
    <subcellularLocation>
        <location evidence="1">Cytoplasm</location>
    </subcellularLocation>
</comment>
<comment type="similarity">
    <text evidence="1">Belongs to the lyase 1 family. Argininosuccinate lyase subfamily.</text>
</comment>
<name>ARLY_PYRAR</name>
<dbReference type="EC" id="4.3.2.1" evidence="1"/>
<dbReference type="EMBL" id="CP000660">
    <property type="protein sequence ID" value="ABP50551.1"/>
    <property type="molecule type" value="Genomic_DNA"/>
</dbReference>
<dbReference type="SMR" id="A4WJI4"/>
<dbReference type="STRING" id="340102.Pars_0971"/>
<dbReference type="KEGG" id="pas:Pars_0971"/>
<dbReference type="HOGENOM" id="CLU_027272_2_0_2"/>
<dbReference type="OrthoDB" id="27337at2157"/>
<dbReference type="PhylomeDB" id="A4WJI4"/>
<dbReference type="UniPathway" id="UPA00068">
    <property type="reaction ID" value="UER00114"/>
</dbReference>
<dbReference type="Proteomes" id="UP000001567">
    <property type="component" value="Chromosome"/>
</dbReference>
<dbReference type="GO" id="GO:0005829">
    <property type="term" value="C:cytosol"/>
    <property type="evidence" value="ECO:0007669"/>
    <property type="project" value="TreeGrafter"/>
</dbReference>
<dbReference type="GO" id="GO:0004056">
    <property type="term" value="F:argininosuccinate lyase activity"/>
    <property type="evidence" value="ECO:0007669"/>
    <property type="project" value="UniProtKB-UniRule"/>
</dbReference>
<dbReference type="GO" id="GO:0042450">
    <property type="term" value="P:arginine biosynthetic process via ornithine"/>
    <property type="evidence" value="ECO:0007669"/>
    <property type="project" value="InterPro"/>
</dbReference>
<dbReference type="GO" id="GO:0006526">
    <property type="term" value="P:L-arginine biosynthetic process"/>
    <property type="evidence" value="ECO:0007669"/>
    <property type="project" value="UniProtKB-UniRule"/>
</dbReference>
<dbReference type="Gene3D" id="1.10.40.30">
    <property type="entry name" value="Fumarase/aspartase (C-terminal domain)"/>
    <property type="match status" value="1"/>
</dbReference>
<dbReference type="Gene3D" id="1.20.200.10">
    <property type="entry name" value="Fumarase/aspartase (Central domain)"/>
    <property type="match status" value="1"/>
</dbReference>
<dbReference type="Gene3D" id="1.10.275.10">
    <property type="entry name" value="Fumarase/aspartase (N-terminal domain)"/>
    <property type="match status" value="1"/>
</dbReference>
<dbReference type="HAMAP" id="MF_00006">
    <property type="entry name" value="Arg_succ_lyase"/>
    <property type="match status" value="1"/>
</dbReference>
<dbReference type="InterPro" id="IPR009049">
    <property type="entry name" value="Argininosuccinate_lyase"/>
</dbReference>
<dbReference type="InterPro" id="IPR024083">
    <property type="entry name" value="Fumarase/histidase_N"/>
</dbReference>
<dbReference type="InterPro" id="IPR000362">
    <property type="entry name" value="Fumarate_lyase_fam"/>
</dbReference>
<dbReference type="InterPro" id="IPR022761">
    <property type="entry name" value="Fumarate_lyase_N"/>
</dbReference>
<dbReference type="InterPro" id="IPR008948">
    <property type="entry name" value="L-Aspartase-like"/>
</dbReference>
<dbReference type="PANTHER" id="PTHR43814">
    <property type="entry name" value="ARGININOSUCCINATE LYASE"/>
    <property type="match status" value="1"/>
</dbReference>
<dbReference type="PANTHER" id="PTHR43814:SF1">
    <property type="entry name" value="ARGININOSUCCINATE LYASE"/>
    <property type="match status" value="1"/>
</dbReference>
<dbReference type="Pfam" id="PF00206">
    <property type="entry name" value="Lyase_1"/>
    <property type="match status" value="1"/>
</dbReference>
<dbReference type="PRINTS" id="PR00145">
    <property type="entry name" value="ARGSUCLYASE"/>
</dbReference>
<dbReference type="PRINTS" id="PR00149">
    <property type="entry name" value="FUMRATELYASE"/>
</dbReference>
<dbReference type="SUPFAM" id="SSF48557">
    <property type="entry name" value="L-aspartase-like"/>
    <property type="match status" value="1"/>
</dbReference>
<reference key="1">
    <citation type="submission" date="2007-04" db="EMBL/GenBank/DDBJ databases">
        <title>Complete sequence of Pyrobaculum arsenaticum DSM 13514.</title>
        <authorList>
            <consortium name="US DOE Joint Genome Institute"/>
            <person name="Copeland A."/>
            <person name="Lucas S."/>
            <person name="Lapidus A."/>
            <person name="Barry K."/>
            <person name="Glavina del Rio T."/>
            <person name="Dalin E."/>
            <person name="Tice H."/>
            <person name="Pitluck S."/>
            <person name="Chain P."/>
            <person name="Malfatti S."/>
            <person name="Shin M."/>
            <person name="Vergez L."/>
            <person name="Schmutz J."/>
            <person name="Larimer F."/>
            <person name="Land M."/>
            <person name="Hauser L."/>
            <person name="Kyrpides N."/>
            <person name="Mikhailova N."/>
            <person name="Cozen A.E."/>
            <person name="Fitz-Gibbon S.T."/>
            <person name="House C.H."/>
            <person name="Saltikov C."/>
            <person name="Lowe T.M."/>
            <person name="Richardson P."/>
        </authorList>
    </citation>
    <scope>NUCLEOTIDE SEQUENCE [LARGE SCALE GENOMIC DNA]</scope>
    <source>
        <strain>ATCC 700994 / DSM 13514 / JCM 11321 / PZ6</strain>
    </source>
</reference>
<feature type="chain" id="PRO_1000089104" description="Argininosuccinate lyase">
    <location>
        <begin position="1"/>
        <end position="429"/>
    </location>
</feature>
<sequence length="429" mass="47299">MSFYRSWIGGRGDLVQRYTSSIRDDAEIAEEVVKVMKAHVTHLAEIGALRKEVADKIVAALEEVDPTELLRGEFEDIHEALEKWLIDKLGEDVGGWVGLARSRNDHVAAAIRLAALKKVGALREAAMRLRCALAARALEYADCPMPSFTHFQPAQVVTFGHYLLAVDELVAEFLHVLAAAEDLAKRSPLGAGPAGGVRTPVDRRRLAELAGFKDVVENTLYASGGRFFALALASAVTSFLVELSRAVDDFIRWNNPLLGYVEAPPEHVSTSSIMPHKRNLVTLEVLRARSEEAVGHYAALSGVVAKVGLGYSLDLQEATRHLWDILNIAIEGVEVLADFVEKIKFNCEKGRRDAELYYATSSDTAEERALRGVPFRKAYFELASEIREGKARLLTVDEALKRPVLGSANPEEVRKSASRRLALCRPKSF</sequence>